<organism>
    <name type="scientific">Chlorobium luteolum (strain DSM 273 / BCRC 81028 / 2530)</name>
    <name type="common">Pelodictyon luteolum</name>
    <dbReference type="NCBI Taxonomy" id="319225"/>
    <lineage>
        <taxon>Bacteria</taxon>
        <taxon>Pseudomonadati</taxon>
        <taxon>Chlorobiota</taxon>
        <taxon>Chlorobiia</taxon>
        <taxon>Chlorobiales</taxon>
        <taxon>Chlorobiaceae</taxon>
        <taxon>Chlorobium/Pelodictyon group</taxon>
        <taxon>Pelodictyon</taxon>
    </lineage>
</organism>
<name>AROK_CHLL3</name>
<gene>
    <name evidence="1" type="primary">aroK</name>
    <name type="ordered locus">Plut_1406</name>
</gene>
<reference key="1">
    <citation type="submission" date="2005-08" db="EMBL/GenBank/DDBJ databases">
        <title>Complete sequence of Pelodictyon luteolum DSM 273.</title>
        <authorList>
            <consortium name="US DOE Joint Genome Institute"/>
            <person name="Copeland A."/>
            <person name="Lucas S."/>
            <person name="Lapidus A."/>
            <person name="Barry K."/>
            <person name="Detter J.C."/>
            <person name="Glavina T."/>
            <person name="Hammon N."/>
            <person name="Israni S."/>
            <person name="Pitluck S."/>
            <person name="Bryant D."/>
            <person name="Schmutz J."/>
            <person name="Larimer F."/>
            <person name="Land M."/>
            <person name="Kyrpides N."/>
            <person name="Ivanova N."/>
            <person name="Richardson P."/>
        </authorList>
    </citation>
    <scope>NUCLEOTIDE SEQUENCE [LARGE SCALE GENOMIC DNA]</scope>
    <source>
        <strain>DSM 273 / BCRC 81028 / 2530</strain>
    </source>
</reference>
<protein>
    <recommendedName>
        <fullName evidence="1">Shikimate kinase</fullName>
        <shortName evidence="1">SK</shortName>
        <ecNumber evidence="1">2.7.1.71</ecNumber>
    </recommendedName>
</protein>
<feature type="chain" id="PRO_0000237905" description="Shikimate kinase">
    <location>
        <begin position="1"/>
        <end position="202"/>
    </location>
</feature>
<feature type="binding site" evidence="1">
    <location>
        <begin position="20"/>
        <end position="25"/>
    </location>
    <ligand>
        <name>ATP</name>
        <dbReference type="ChEBI" id="CHEBI:30616"/>
    </ligand>
</feature>
<feature type="binding site" evidence="1">
    <location>
        <position position="24"/>
    </location>
    <ligand>
        <name>Mg(2+)</name>
        <dbReference type="ChEBI" id="CHEBI:18420"/>
    </ligand>
</feature>
<feature type="binding site" evidence="1">
    <location>
        <position position="42"/>
    </location>
    <ligand>
        <name>substrate</name>
    </ligand>
</feature>
<feature type="binding site" evidence="1">
    <location>
        <position position="66"/>
    </location>
    <ligand>
        <name>substrate</name>
    </ligand>
</feature>
<feature type="binding site" evidence="1">
    <location>
        <position position="88"/>
    </location>
    <ligand>
        <name>substrate</name>
    </ligand>
</feature>
<feature type="binding site" evidence="1">
    <location>
        <position position="126"/>
    </location>
    <ligand>
        <name>ATP</name>
        <dbReference type="ChEBI" id="CHEBI:30616"/>
    </ligand>
</feature>
<feature type="binding site" evidence="1">
    <location>
        <position position="153"/>
    </location>
    <ligand>
        <name>substrate</name>
    </ligand>
</feature>
<accession>Q3B316</accession>
<evidence type="ECO:0000255" key="1">
    <source>
        <dbReference type="HAMAP-Rule" id="MF_00109"/>
    </source>
</evidence>
<keyword id="KW-0028">Amino-acid biosynthesis</keyword>
<keyword id="KW-0057">Aromatic amino acid biosynthesis</keyword>
<keyword id="KW-0067">ATP-binding</keyword>
<keyword id="KW-0963">Cytoplasm</keyword>
<keyword id="KW-0418">Kinase</keyword>
<keyword id="KW-0460">Magnesium</keyword>
<keyword id="KW-0479">Metal-binding</keyword>
<keyword id="KW-0547">Nucleotide-binding</keyword>
<keyword id="KW-1185">Reference proteome</keyword>
<keyword id="KW-0808">Transferase</keyword>
<comment type="function">
    <text evidence="1">Catalyzes the specific phosphorylation of the 3-hydroxyl group of shikimic acid using ATP as a cosubstrate.</text>
</comment>
<comment type="catalytic activity">
    <reaction evidence="1">
        <text>shikimate + ATP = 3-phosphoshikimate + ADP + H(+)</text>
        <dbReference type="Rhea" id="RHEA:13121"/>
        <dbReference type="ChEBI" id="CHEBI:15378"/>
        <dbReference type="ChEBI" id="CHEBI:30616"/>
        <dbReference type="ChEBI" id="CHEBI:36208"/>
        <dbReference type="ChEBI" id="CHEBI:145989"/>
        <dbReference type="ChEBI" id="CHEBI:456216"/>
        <dbReference type="EC" id="2.7.1.71"/>
    </reaction>
</comment>
<comment type="cofactor">
    <cofactor evidence="1">
        <name>Mg(2+)</name>
        <dbReference type="ChEBI" id="CHEBI:18420"/>
    </cofactor>
    <text evidence="1">Binds 1 Mg(2+) ion per subunit.</text>
</comment>
<comment type="pathway">
    <text evidence="1">Metabolic intermediate biosynthesis; chorismate biosynthesis; chorismate from D-erythrose 4-phosphate and phosphoenolpyruvate: step 5/7.</text>
</comment>
<comment type="subunit">
    <text evidence="1">Monomer.</text>
</comment>
<comment type="subcellular location">
    <subcellularLocation>
        <location evidence="1">Cytoplasm</location>
    </subcellularLocation>
</comment>
<comment type="similarity">
    <text evidence="1">Belongs to the shikimate kinase family.</text>
</comment>
<sequence>MGQDTITKQHSLIFLTGFSGSGKSTIGPLLANSLGYEFLDVDQAVEQRAGKPITRIFAEEGEAAFRELELQTLKTVAGEKEMVVSLGGGALQYDPSHAFIAGAGTLVYLKSSAANLAKRLVNKRDRPLLRGENGRKHSREELEEKIRRILEEREPRYQQAALTVQTDQKRIGSTVEELTRKIERLVRKAPQIGEDGQQPEQP</sequence>
<dbReference type="EC" id="2.7.1.71" evidence="1"/>
<dbReference type="EMBL" id="CP000096">
    <property type="protein sequence ID" value="ABB24265.1"/>
    <property type="molecule type" value="Genomic_DNA"/>
</dbReference>
<dbReference type="RefSeq" id="WP_011358137.1">
    <property type="nucleotide sequence ID" value="NC_007512.1"/>
</dbReference>
<dbReference type="SMR" id="Q3B316"/>
<dbReference type="STRING" id="319225.Plut_1406"/>
<dbReference type="KEGG" id="plt:Plut_1406"/>
<dbReference type="eggNOG" id="COG0703">
    <property type="taxonomic scope" value="Bacteria"/>
</dbReference>
<dbReference type="HOGENOM" id="CLU_057607_2_1_10"/>
<dbReference type="OrthoDB" id="9800332at2"/>
<dbReference type="UniPathway" id="UPA00053">
    <property type="reaction ID" value="UER00088"/>
</dbReference>
<dbReference type="Proteomes" id="UP000002709">
    <property type="component" value="Chromosome"/>
</dbReference>
<dbReference type="GO" id="GO:0005829">
    <property type="term" value="C:cytosol"/>
    <property type="evidence" value="ECO:0007669"/>
    <property type="project" value="TreeGrafter"/>
</dbReference>
<dbReference type="GO" id="GO:0005524">
    <property type="term" value="F:ATP binding"/>
    <property type="evidence" value="ECO:0007669"/>
    <property type="project" value="UniProtKB-UniRule"/>
</dbReference>
<dbReference type="GO" id="GO:0000287">
    <property type="term" value="F:magnesium ion binding"/>
    <property type="evidence" value="ECO:0007669"/>
    <property type="project" value="UniProtKB-UniRule"/>
</dbReference>
<dbReference type="GO" id="GO:0004765">
    <property type="term" value="F:shikimate kinase activity"/>
    <property type="evidence" value="ECO:0007669"/>
    <property type="project" value="UniProtKB-UniRule"/>
</dbReference>
<dbReference type="GO" id="GO:0008652">
    <property type="term" value="P:amino acid biosynthetic process"/>
    <property type="evidence" value="ECO:0007669"/>
    <property type="project" value="UniProtKB-KW"/>
</dbReference>
<dbReference type="GO" id="GO:0009073">
    <property type="term" value="P:aromatic amino acid family biosynthetic process"/>
    <property type="evidence" value="ECO:0007669"/>
    <property type="project" value="UniProtKB-KW"/>
</dbReference>
<dbReference type="GO" id="GO:0009423">
    <property type="term" value="P:chorismate biosynthetic process"/>
    <property type="evidence" value="ECO:0007669"/>
    <property type="project" value="UniProtKB-UniRule"/>
</dbReference>
<dbReference type="CDD" id="cd00464">
    <property type="entry name" value="SK"/>
    <property type="match status" value="1"/>
</dbReference>
<dbReference type="Gene3D" id="3.40.50.300">
    <property type="entry name" value="P-loop containing nucleotide triphosphate hydrolases"/>
    <property type="match status" value="1"/>
</dbReference>
<dbReference type="HAMAP" id="MF_00109">
    <property type="entry name" value="Shikimate_kinase"/>
    <property type="match status" value="1"/>
</dbReference>
<dbReference type="InterPro" id="IPR027417">
    <property type="entry name" value="P-loop_NTPase"/>
</dbReference>
<dbReference type="InterPro" id="IPR031322">
    <property type="entry name" value="Shikimate/glucono_kinase"/>
</dbReference>
<dbReference type="InterPro" id="IPR000623">
    <property type="entry name" value="Shikimate_kinase/TSH1"/>
</dbReference>
<dbReference type="InterPro" id="IPR023000">
    <property type="entry name" value="Shikimate_kinase_CS"/>
</dbReference>
<dbReference type="PANTHER" id="PTHR21087">
    <property type="entry name" value="SHIKIMATE KINASE"/>
    <property type="match status" value="1"/>
</dbReference>
<dbReference type="PANTHER" id="PTHR21087:SF16">
    <property type="entry name" value="SHIKIMATE KINASE 1, CHLOROPLASTIC"/>
    <property type="match status" value="1"/>
</dbReference>
<dbReference type="Pfam" id="PF01202">
    <property type="entry name" value="SKI"/>
    <property type="match status" value="1"/>
</dbReference>
<dbReference type="PRINTS" id="PR01100">
    <property type="entry name" value="SHIKIMTKNASE"/>
</dbReference>
<dbReference type="SUPFAM" id="SSF52540">
    <property type="entry name" value="P-loop containing nucleoside triphosphate hydrolases"/>
    <property type="match status" value="1"/>
</dbReference>
<dbReference type="PROSITE" id="PS01128">
    <property type="entry name" value="SHIKIMATE_KINASE"/>
    <property type="match status" value="1"/>
</dbReference>
<proteinExistence type="inferred from homology"/>